<reference key="1">
    <citation type="submission" date="2005-08" db="EMBL/GenBank/DDBJ databases">
        <title>Complete sequence of Chlorobium chlorochromatii CaD3.</title>
        <authorList>
            <consortium name="US DOE Joint Genome Institute"/>
            <person name="Copeland A."/>
            <person name="Lucas S."/>
            <person name="Lapidus A."/>
            <person name="Barry K."/>
            <person name="Detter J.C."/>
            <person name="Glavina T."/>
            <person name="Hammon N."/>
            <person name="Israni S."/>
            <person name="Pitluck S."/>
            <person name="Bryant D."/>
            <person name="Schmutz J."/>
            <person name="Larimer F."/>
            <person name="Land M."/>
            <person name="Kyrpides N."/>
            <person name="Ivanova N."/>
            <person name="Richardson P."/>
        </authorList>
    </citation>
    <scope>NUCLEOTIDE SEQUENCE [LARGE SCALE GENOMIC DNA]</scope>
    <source>
        <strain>CaD3</strain>
    </source>
</reference>
<proteinExistence type="inferred from homology"/>
<keyword id="KW-0067">ATP-binding</keyword>
<keyword id="KW-0963">Cytoplasm</keyword>
<keyword id="KW-0418">Kinase</keyword>
<keyword id="KW-0547">Nucleotide-binding</keyword>
<keyword id="KW-0808">Transferase</keyword>
<dbReference type="EC" id="2.7.4.8" evidence="1"/>
<dbReference type="EMBL" id="CP000108">
    <property type="protein sequence ID" value="ABB28712.1"/>
    <property type="molecule type" value="Genomic_DNA"/>
</dbReference>
<dbReference type="SMR" id="Q3AQL3"/>
<dbReference type="STRING" id="340177.Cag_1456"/>
<dbReference type="KEGG" id="cch:Cag_1456"/>
<dbReference type="eggNOG" id="COG0194">
    <property type="taxonomic scope" value="Bacteria"/>
</dbReference>
<dbReference type="HOGENOM" id="CLU_001715_1_2_10"/>
<dbReference type="OrthoDB" id="9808150at2"/>
<dbReference type="GO" id="GO:0005829">
    <property type="term" value="C:cytosol"/>
    <property type="evidence" value="ECO:0007669"/>
    <property type="project" value="TreeGrafter"/>
</dbReference>
<dbReference type="GO" id="GO:0005524">
    <property type="term" value="F:ATP binding"/>
    <property type="evidence" value="ECO:0007669"/>
    <property type="project" value="UniProtKB-UniRule"/>
</dbReference>
<dbReference type="GO" id="GO:0004385">
    <property type="term" value="F:guanylate kinase activity"/>
    <property type="evidence" value="ECO:0007669"/>
    <property type="project" value="UniProtKB-UniRule"/>
</dbReference>
<dbReference type="CDD" id="cd00071">
    <property type="entry name" value="GMPK"/>
    <property type="match status" value="1"/>
</dbReference>
<dbReference type="FunFam" id="3.30.63.10:FF:000002">
    <property type="entry name" value="Guanylate kinase 1"/>
    <property type="match status" value="1"/>
</dbReference>
<dbReference type="Gene3D" id="3.30.63.10">
    <property type="entry name" value="Guanylate Kinase phosphate binding domain"/>
    <property type="match status" value="1"/>
</dbReference>
<dbReference type="Gene3D" id="3.40.50.300">
    <property type="entry name" value="P-loop containing nucleotide triphosphate hydrolases"/>
    <property type="match status" value="1"/>
</dbReference>
<dbReference type="HAMAP" id="MF_00328">
    <property type="entry name" value="Guanylate_kinase"/>
    <property type="match status" value="1"/>
</dbReference>
<dbReference type="InterPro" id="IPR008145">
    <property type="entry name" value="GK/Ca_channel_bsu"/>
</dbReference>
<dbReference type="InterPro" id="IPR008144">
    <property type="entry name" value="Guanylate_kin-like_dom"/>
</dbReference>
<dbReference type="InterPro" id="IPR017665">
    <property type="entry name" value="Guanylate_kinase"/>
</dbReference>
<dbReference type="InterPro" id="IPR020590">
    <property type="entry name" value="Guanylate_kinase_CS"/>
</dbReference>
<dbReference type="InterPro" id="IPR027417">
    <property type="entry name" value="P-loop_NTPase"/>
</dbReference>
<dbReference type="NCBIfam" id="TIGR03263">
    <property type="entry name" value="guanyl_kin"/>
    <property type="match status" value="1"/>
</dbReference>
<dbReference type="PANTHER" id="PTHR23117:SF13">
    <property type="entry name" value="GUANYLATE KINASE"/>
    <property type="match status" value="1"/>
</dbReference>
<dbReference type="PANTHER" id="PTHR23117">
    <property type="entry name" value="GUANYLATE KINASE-RELATED"/>
    <property type="match status" value="1"/>
</dbReference>
<dbReference type="Pfam" id="PF00625">
    <property type="entry name" value="Guanylate_kin"/>
    <property type="match status" value="1"/>
</dbReference>
<dbReference type="SMART" id="SM00072">
    <property type="entry name" value="GuKc"/>
    <property type="match status" value="1"/>
</dbReference>
<dbReference type="SUPFAM" id="SSF52540">
    <property type="entry name" value="P-loop containing nucleoside triphosphate hydrolases"/>
    <property type="match status" value="1"/>
</dbReference>
<dbReference type="PROSITE" id="PS00856">
    <property type="entry name" value="GUANYLATE_KINASE_1"/>
    <property type="match status" value="1"/>
</dbReference>
<dbReference type="PROSITE" id="PS50052">
    <property type="entry name" value="GUANYLATE_KINASE_2"/>
    <property type="match status" value="1"/>
</dbReference>
<sequence length="190" mass="20968">MAVEPSGKLIVFSAPSGAGKTTIATMVLQRIANLSFSVSATTRKQREGEQDGVNYYFLDKATFEKKIEQGGFIEHEFFFGNYYGTLLDATESVLASGKNLLLDVDVKGALNVRKLFGERSLLIFIQPPSMEVLIERLQGRGSEDDAALQERLERARFEMSFADQFDTIIVNNNLTAAVDDVEAAIVNFIG</sequence>
<organism>
    <name type="scientific">Chlorobium chlorochromatii (strain CaD3)</name>
    <dbReference type="NCBI Taxonomy" id="340177"/>
    <lineage>
        <taxon>Bacteria</taxon>
        <taxon>Pseudomonadati</taxon>
        <taxon>Chlorobiota</taxon>
        <taxon>Chlorobiia</taxon>
        <taxon>Chlorobiales</taxon>
        <taxon>Chlorobiaceae</taxon>
        <taxon>Chlorobium/Pelodictyon group</taxon>
        <taxon>Chlorobium</taxon>
    </lineage>
</organism>
<feature type="chain" id="PRO_0000266305" description="Guanylate kinase">
    <location>
        <begin position="1"/>
        <end position="190"/>
    </location>
</feature>
<feature type="domain" description="Guanylate kinase-like" evidence="1">
    <location>
        <begin position="7"/>
        <end position="186"/>
    </location>
</feature>
<feature type="binding site" evidence="1">
    <location>
        <begin position="14"/>
        <end position="21"/>
    </location>
    <ligand>
        <name>ATP</name>
        <dbReference type="ChEBI" id="CHEBI:30616"/>
    </ligand>
</feature>
<name>KGUA_CHLCH</name>
<comment type="function">
    <text evidence="1">Essential for recycling GMP and indirectly, cGMP.</text>
</comment>
<comment type="catalytic activity">
    <reaction evidence="1">
        <text>GMP + ATP = GDP + ADP</text>
        <dbReference type="Rhea" id="RHEA:20780"/>
        <dbReference type="ChEBI" id="CHEBI:30616"/>
        <dbReference type="ChEBI" id="CHEBI:58115"/>
        <dbReference type="ChEBI" id="CHEBI:58189"/>
        <dbReference type="ChEBI" id="CHEBI:456216"/>
        <dbReference type="EC" id="2.7.4.8"/>
    </reaction>
</comment>
<comment type="subcellular location">
    <subcellularLocation>
        <location evidence="1">Cytoplasm</location>
    </subcellularLocation>
</comment>
<comment type="similarity">
    <text evidence="1">Belongs to the guanylate kinase family.</text>
</comment>
<evidence type="ECO:0000255" key="1">
    <source>
        <dbReference type="HAMAP-Rule" id="MF_00328"/>
    </source>
</evidence>
<accession>Q3AQL3</accession>
<protein>
    <recommendedName>
        <fullName evidence="1">Guanylate kinase</fullName>
        <ecNumber evidence="1">2.7.4.8</ecNumber>
    </recommendedName>
    <alternativeName>
        <fullName evidence="1">GMP kinase</fullName>
    </alternativeName>
</protein>
<gene>
    <name evidence="1" type="primary">gmk</name>
    <name type="ordered locus">Cag_1456</name>
</gene>